<comment type="catalytic activity">
    <reaction evidence="1">
        <text>L-histidinol phosphate + 2-oxoglutarate = 3-(imidazol-4-yl)-2-oxopropyl phosphate + L-glutamate</text>
        <dbReference type="Rhea" id="RHEA:23744"/>
        <dbReference type="ChEBI" id="CHEBI:16810"/>
        <dbReference type="ChEBI" id="CHEBI:29985"/>
        <dbReference type="ChEBI" id="CHEBI:57766"/>
        <dbReference type="ChEBI" id="CHEBI:57980"/>
        <dbReference type="EC" id="2.6.1.9"/>
    </reaction>
</comment>
<comment type="cofactor">
    <cofactor evidence="1">
        <name>pyridoxal 5'-phosphate</name>
        <dbReference type="ChEBI" id="CHEBI:597326"/>
    </cofactor>
</comment>
<comment type="pathway">
    <text evidence="1">Amino-acid biosynthesis; L-histidine biosynthesis; L-histidine from 5-phospho-alpha-D-ribose 1-diphosphate: step 7/9.</text>
</comment>
<comment type="subunit">
    <text evidence="1">Homodimer.</text>
</comment>
<comment type="similarity">
    <text evidence="1">Belongs to the class-II pyridoxal-phosphate-dependent aminotransferase family. Histidinol-phosphate aminotransferase subfamily.</text>
</comment>
<proteinExistence type="inferred from homology"/>
<accession>Q2JPM4</accession>
<organism>
    <name type="scientific">Synechococcus sp. (strain JA-2-3B'a(2-13))</name>
    <name type="common">Cyanobacteria bacterium Yellowstone B-Prime</name>
    <dbReference type="NCBI Taxonomy" id="321332"/>
    <lineage>
        <taxon>Bacteria</taxon>
        <taxon>Bacillati</taxon>
        <taxon>Cyanobacteriota</taxon>
        <taxon>Cyanophyceae</taxon>
        <taxon>Synechococcales</taxon>
        <taxon>Synechococcaceae</taxon>
        <taxon>Synechococcus</taxon>
    </lineage>
</organism>
<sequence length="353" mass="39543">MCALQYLRPDLLYLKPYDAVPAPAADKLDANEFPLDWPAGFKQKLSLLWEKGIPSNRYPDAHHRGLKQAIAAYAGAEPEQISLGNGSDELIRSLLIATCLGGRGGILVAEPTFSMYAILAQSLGIPVVRVPRDPETFALDLERCQQALREHPIRVVCLVDPNSPTGNGLTAAEWEWVEGLPEEILVILDEAYFEFSRHTALPKLAEHPNWVILRTFSKAFRLAAHRVGYAVGHPQLMQVLDGIRLPYNLTALSQWAVQMALEHAEELLADVTLICQEREALYQALQELPGVRVWPSQANFLYFRVAGWDPQELQRAWQELGTGVRYTGGGLRLTVGTPEENRRALERLRQILQ</sequence>
<gene>
    <name evidence="1" type="primary">hisC</name>
    <name type="ordered locus">CYB_0260</name>
</gene>
<evidence type="ECO:0000255" key="1">
    <source>
        <dbReference type="HAMAP-Rule" id="MF_01023"/>
    </source>
</evidence>
<keyword id="KW-0028">Amino-acid biosynthesis</keyword>
<keyword id="KW-0032">Aminotransferase</keyword>
<keyword id="KW-0368">Histidine biosynthesis</keyword>
<keyword id="KW-0663">Pyridoxal phosphate</keyword>
<keyword id="KW-1185">Reference proteome</keyword>
<keyword id="KW-0808">Transferase</keyword>
<protein>
    <recommendedName>
        <fullName evidence="1">Histidinol-phosphate aminotransferase</fullName>
        <ecNumber evidence="1">2.6.1.9</ecNumber>
    </recommendedName>
    <alternativeName>
        <fullName evidence="1">Imidazole acetol-phosphate transaminase</fullName>
    </alternativeName>
</protein>
<name>HIS8_SYNJB</name>
<dbReference type="EC" id="2.6.1.9" evidence="1"/>
<dbReference type="EMBL" id="CP000240">
    <property type="protein sequence ID" value="ABD01258.1"/>
    <property type="molecule type" value="Genomic_DNA"/>
</dbReference>
<dbReference type="RefSeq" id="WP_011431927.1">
    <property type="nucleotide sequence ID" value="NC_007776.1"/>
</dbReference>
<dbReference type="SMR" id="Q2JPM4"/>
<dbReference type="STRING" id="321332.CYB_0260"/>
<dbReference type="KEGG" id="cyb:CYB_0260"/>
<dbReference type="eggNOG" id="COG0079">
    <property type="taxonomic scope" value="Bacteria"/>
</dbReference>
<dbReference type="HOGENOM" id="CLU_017584_3_1_3"/>
<dbReference type="OrthoDB" id="9813612at2"/>
<dbReference type="UniPathway" id="UPA00031">
    <property type="reaction ID" value="UER00012"/>
</dbReference>
<dbReference type="Proteomes" id="UP000001938">
    <property type="component" value="Chromosome"/>
</dbReference>
<dbReference type="GO" id="GO:0004400">
    <property type="term" value="F:histidinol-phosphate transaminase activity"/>
    <property type="evidence" value="ECO:0007669"/>
    <property type="project" value="UniProtKB-UniRule"/>
</dbReference>
<dbReference type="GO" id="GO:0030170">
    <property type="term" value="F:pyridoxal phosphate binding"/>
    <property type="evidence" value="ECO:0007669"/>
    <property type="project" value="InterPro"/>
</dbReference>
<dbReference type="GO" id="GO:0000105">
    <property type="term" value="P:L-histidine biosynthetic process"/>
    <property type="evidence" value="ECO:0007669"/>
    <property type="project" value="UniProtKB-UniRule"/>
</dbReference>
<dbReference type="CDD" id="cd00609">
    <property type="entry name" value="AAT_like"/>
    <property type="match status" value="1"/>
</dbReference>
<dbReference type="Gene3D" id="3.90.1150.10">
    <property type="entry name" value="Aspartate Aminotransferase, domain 1"/>
    <property type="match status" value="1"/>
</dbReference>
<dbReference type="Gene3D" id="3.40.640.10">
    <property type="entry name" value="Type I PLP-dependent aspartate aminotransferase-like (Major domain)"/>
    <property type="match status" value="1"/>
</dbReference>
<dbReference type="HAMAP" id="MF_01023">
    <property type="entry name" value="HisC_aminotrans_2"/>
    <property type="match status" value="1"/>
</dbReference>
<dbReference type="InterPro" id="IPR004839">
    <property type="entry name" value="Aminotransferase_I/II_large"/>
</dbReference>
<dbReference type="InterPro" id="IPR005861">
    <property type="entry name" value="HisP_aminotrans"/>
</dbReference>
<dbReference type="InterPro" id="IPR050106">
    <property type="entry name" value="HistidinolP_aminotransfase"/>
</dbReference>
<dbReference type="InterPro" id="IPR015424">
    <property type="entry name" value="PyrdxlP-dep_Trfase"/>
</dbReference>
<dbReference type="InterPro" id="IPR015421">
    <property type="entry name" value="PyrdxlP-dep_Trfase_major"/>
</dbReference>
<dbReference type="InterPro" id="IPR015422">
    <property type="entry name" value="PyrdxlP-dep_Trfase_small"/>
</dbReference>
<dbReference type="NCBIfam" id="NF002726">
    <property type="entry name" value="PRK02610.1"/>
    <property type="match status" value="1"/>
</dbReference>
<dbReference type="PANTHER" id="PTHR43643:SF6">
    <property type="entry name" value="HISTIDINOL-PHOSPHATE AMINOTRANSFERASE"/>
    <property type="match status" value="1"/>
</dbReference>
<dbReference type="PANTHER" id="PTHR43643">
    <property type="entry name" value="HISTIDINOL-PHOSPHATE AMINOTRANSFERASE 2"/>
    <property type="match status" value="1"/>
</dbReference>
<dbReference type="Pfam" id="PF00155">
    <property type="entry name" value="Aminotran_1_2"/>
    <property type="match status" value="1"/>
</dbReference>
<dbReference type="SUPFAM" id="SSF53383">
    <property type="entry name" value="PLP-dependent transferases"/>
    <property type="match status" value="1"/>
</dbReference>
<reference key="1">
    <citation type="journal article" date="2007" name="ISME J.">
        <title>Population level functional diversity in a microbial community revealed by comparative genomic and metagenomic analyses.</title>
        <authorList>
            <person name="Bhaya D."/>
            <person name="Grossman A.R."/>
            <person name="Steunou A.-S."/>
            <person name="Khuri N."/>
            <person name="Cohan F.M."/>
            <person name="Hamamura N."/>
            <person name="Melendrez M.C."/>
            <person name="Bateson M.M."/>
            <person name="Ward D.M."/>
            <person name="Heidelberg J.F."/>
        </authorList>
    </citation>
    <scope>NUCLEOTIDE SEQUENCE [LARGE SCALE GENOMIC DNA]</scope>
    <source>
        <strain>JA-2-3B'a(2-13)</strain>
    </source>
</reference>
<feature type="chain" id="PRO_0000319791" description="Histidinol-phosphate aminotransferase">
    <location>
        <begin position="1"/>
        <end position="353"/>
    </location>
</feature>
<feature type="modified residue" description="N6-(pyridoxal phosphate)lysine" evidence="1">
    <location>
        <position position="218"/>
    </location>
</feature>